<dbReference type="EC" id="3.5.99.6" evidence="3"/>
<dbReference type="EMBL" id="CH478133">
    <property type="protein sequence ID" value="EAT33845.1"/>
    <property type="molecule type" value="Genomic_DNA"/>
</dbReference>
<dbReference type="EMBL" id="CH478133">
    <property type="protein sequence ID" value="EAT33846.1"/>
    <property type="molecule type" value="Genomic_DNA"/>
</dbReference>
<dbReference type="EMBL" id="CH478133">
    <property type="protein sequence ID" value="EAT33847.1"/>
    <property type="molecule type" value="Genomic_DNA"/>
</dbReference>
<dbReference type="EMBL" id="CH478133">
    <property type="protein sequence ID" value="EAT33848.1"/>
    <property type="molecule type" value="Genomic_DNA"/>
</dbReference>
<dbReference type="EMBL" id="CH478133">
    <property type="protein sequence ID" value="EAT33849.1"/>
    <property type="molecule type" value="Genomic_DNA"/>
</dbReference>
<dbReference type="EMBL" id="CH478133">
    <property type="protein sequence ID" value="EAT33850.1"/>
    <property type="molecule type" value="Genomic_DNA"/>
</dbReference>
<dbReference type="EMBL" id="CH478133">
    <property type="protein sequence ID" value="EAT33851.1"/>
    <property type="molecule type" value="Genomic_DNA"/>
</dbReference>
<dbReference type="RefSeq" id="XP_001657190.1">
    <property type="nucleotide sequence ID" value="XM_001657140.1"/>
</dbReference>
<dbReference type="RefSeq" id="XP_001657191.1">
    <property type="nucleotide sequence ID" value="XM_001657141.1"/>
</dbReference>
<dbReference type="RefSeq" id="XP_001657192.1">
    <property type="nucleotide sequence ID" value="XM_001657142.1"/>
</dbReference>
<dbReference type="RefSeq" id="XP_001657193.1">
    <property type="nucleotide sequence ID" value="XM_001657143.1"/>
</dbReference>
<dbReference type="RefSeq" id="XP_001657194.1">
    <property type="nucleotide sequence ID" value="XM_001657144.1"/>
</dbReference>
<dbReference type="RefSeq" id="XP_001657195.1">
    <property type="nucleotide sequence ID" value="XM_001657145.1"/>
</dbReference>
<dbReference type="RefSeq" id="XP_001657196.1">
    <property type="nucleotide sequence ID" value="XM_001657146.1"/>
</dbReference>
<dbReference type="SMR" id="Q16HW7"/>
<dbReference type="FunCoup" id="Q16HW7">
    <property type="interactions" value="728"/>
</dbReference>
<dbReference type="STRING" id="7159.Q16HW7"/>
<dbReference type="PaxDb" id="7159-AAEL013877-PG"/>
<dbReference type="EnsemblMetazoa" id="AAEL013877-RA">
    <molecule id="Q16HW7-3"/>
    <property type="protein sequence ID" value="AAEL013877-PA"/>
    <property type="gene ID" value="AAEL013877"/>
</dbReference>
<dbReference type="EnsemblMetazoa" id="AAEL013877-RB">
    <molecule id="Q16HW7-3"/>
    <property type="protein sequence ID" value="AAEL013877-PB"/>
    <property type="gene ID" value="AAEL013877"/>
</dbReference>
<dbReference type="VEuPathDB" id="VectorBase:AAEL013877"/>
<dbReference type="eggNOG" id="KOG3148">
    <property type="taxonomic scope" value="Eukaryota"/>
</dbReference>
<dbReference type="InParanoid" id="Q16HW7"/>
<dbReference type="OMA" id="HVITQGI"/>
<dbReference type="PhylomeDB" id="Q16HW7"/>
<dbReference type="UniPathway" id="UPA00113">
    <property type="reaction ID" value="UER00528"/>
</dbReference>
<dbReference type="Proteomes" id="UP000008820">
    <property type="component" value="Chromosome 2"/>
</dbReference>
<dbReference type="Proteomes" id="UP000682892">
    <property type="component" value="Unassembled WGS sequence"/>
</dbReference>
<dbReference type="GO" id="GO:0005737">
    <property type="term" value="C:cytoplasm"/>
    <property type="evidence" value="ECO:0000250"/>
    <property type="project" value="UniProtKB"/>
</dbReference>
<dbReference type="GO" id="GO:0004342">
    <property type="term" value="F:glucosamine-6-phosphate deaminase activity"/>
    <property type="evidence" value="ECO:0000250"/>
    <property type="project" value="UniProtKB"/>
</dbReference>
<dbReference type="GO" id="GO:0042802">
    <property type="term" value="F:identical protein binding"/>
    <property type="evidence" value="ECO:0007669"/>
    <property type="project" value="TreeGrafter"/>
</dbReference>
<dbReference type="GO" id="GO:0005975">
    <property type="term" value="P:carbohydrate metabolic process"/>
    <property type="evidence" value="ECO:0007669"/>
    <property type="project" value="InterPro"/>
</dbReference>
<dbReference type="GO" id="GO:0006091">
    <property type="term" value="P:generation of precursor metabolites and energy"/>
    <property type="evidence" value="ECO:0000250"/>
    <property type="project" value="UniProtKB"/>
</dbReference>
<dbReference type="GO" id="GO:0006043">
    <property type="term" value="P:glucosamine catabolic process"/>
    <property type="evidence" value="ECO:0000250"/>
    <property type="project" value="UniProtKB"/>
</dbReference>
<dbReference type="GO" id="GO:0006046">
    <property type="term" value="P:N-acetylglucosamine catabolic process"/>
    <property type="evidence" value="ECO:0007669"/>
    <property type="project" value="TreeGrafter"/>
</dbReference>
<dbReference type="GO" id="GO:0019262">
    <property type="term" value="P:N-acetylneuraminate catabolic process"/>
    <property type="evidence" value="ECO:0007669"/>
    <property type="project" value="TreeGrafter"/>
</dbReference>
<dbReference type="CDD" id="cd01399">
    <property type="entry name" value="GlcN6P_deaminase"/>
    <property type="match status" value="1"/>
</dbReference>
<dbReference type="FunFam" id="3.40.50.1360:FF:000004">
    <property type="entry name" value="Glucosamine-6-phosphate isomerase"/>
    <property type="match status" value="1"/>
</dbReference>
<dbReference type="Gene3D" id="3.40.50.1360">
    <property type="match status" value="1"/>
</dbReference>
<dbReference type="HAMAP" id="MF_01241">
    <property type="entry name" value="GlcN6P_deamin"/>
    <property type="match status" value="1"/>
</dbReference>
<dbReference type="InterPro" id="IPR006148">
    <property type="entry name" value="Glc/Gal-6P_isomerase"/>
</dbReference>
<dbReference type="InterPro" id="IPR004547">
    <property type="entry name" value="Glucosamine6P_isomerase"/>
</dbReference>
<dbReference type="InterPro" id="IPR018321">
    <property type="entry name" value="Glucosamine6P_isomerase_CS"/>
</dbReference>
<dbReference type="InterPro" id="IPR037171">
    <property type="entry name" value="NagB/RpiA_transferase-like"/>
</dbReference>
<dbReference type="NCBIfam" id="TIGR00502">
    <property type="entry name" value="nagB"/>
    <property type="match status" value="1"/>
</dbReference>
<dbReference type="PANTHER" id="PTHR11280">
    <property type="entry name" value="GLUCOSAMINE-6-PHOSPHATE ISOMERASE"/>
    <property type="match status" value="1"/>
</dbReference>
<dbReference type="PANTHER" id="PTHR11280:SF5">
    <property type="entry name" value="GLUCOSAMINE-6-PHOSPHATE ISOMERASE"/>
    <property type="match status" value="1"/>
</dbReference>
<dbReference type="Pfam" id="PF01182">
    <property type="entry name" value="Glucosamine_iso"/>
    <property type="match status" value="1"/>
</dbReference>
<dbReference type="SUPFAM" id="SSF100950">
    <property type="entry name" value="NagB/RpiA/CoA transferase-like"/>
    <property type="match status" value="1"/>
</dbReference>
<dbReference type="PROSITE" id="PS01161">
    <property type="entry name" value="GLC_GALNAC_ISOMERASE"/>
    <property type="match status" value="1"/>
</dbReference>
<proteinExistence type="inferred from homology"/>
<comment type="function">
    <text evidence="3">Catalyzes the reversible conversion of alpha-D-glucosamine 6-phosphate (GlcN-6P) into beta-D-fructose 6-phosphate (Fru-6P) and ammonium ion, a regulatory reaction step in de novo uridine diphosphate-N-acetyl-alpha-D-glucosamine (UDP-GlcNAc) biosynthesis via hexosamine pathway.</text>
</comment>
<comment type="catalytic activity">
    <reaction evidence="3">
        <text>alpha-D-glucosamine 6-phosphate + H2O = beta-D-fructose 6-phosphate + NH4(+)</text>
        <dbReference type="Rhea" id="RHEA:12172"/>
        <dbReference type="ChEBI" id="CHEBI:15377"/>
        <dbReference type="ChEBI" id="CHEBI:28938"/>
        <dbReference type="ChEBI" id="CHEBI:57634"/>
        <dbReference type="ChEBI" id="CHEBI:75989"/>
        <dbReference type="EC" id="3.5.99.6"/>
    </reaction>
</comment>
<comment type="pathway">
    <text evidence="3">Nucleotide-sugar biosynthesis; UDP-N-acetyl-alpha-D-glucosamine biosynthesis; alpha-D-glucosamine 6-phosphate from D-fructose 6-phosphate: step 1/1.</text>
</comment>
<comment type="subunit">
    <text evidence="1 3">Homohexamer.</text>
</comment>
<comment type="subcellular location">
    <subcellularLocation>
        <location evidence="2">Cytoplasm</location>
    </subcellularLocation>
</comment>
<comment type="alternative products">
    <event type="alternative splicing"/>
    <isoform>
        <id>Q16HW7-1</id>
        <name>E</name>
        <name>F</name>
        <name>G</name>
        <sequence type="displayed"/>
    </isoform>
    <isoform>
        <id>Q16HW7-2</id>
        <name>B</name>
        <name>C</name>
        <name>D</name>
        <sequence type="described" ref="VSP_032747"/>
    </isoform>
    <isoform>
        <id>Q16HW7-3</id>
        <name>A</name>
        <sequence type="described" ref="VSP_032746"/>
    </isoform>
</comment>
<comment type="similarity">
    <text evidence="4">Belongs to the glucosamine/galactosamine-6-phosphate isomerase family.</text>
</comment>
<reference key="1">
    <citation type="journal article" date="2007" name="Science">
        <title>Genome sequence of Aedes aegypti, a major arbovirus vector.</title>
        <authorList>
            <person name="Nene V."/>
            <person name="Wortman J.R."/>
            <person name="Lawson D."/>
            <person name="Haas B.J."/>
            <person name="Kodira C.D."/>
            <person name="Tu Z.J."/>
            <person name="Loftus B.J."/>
            <person name="Xi Z."/>
            <person name="Megy K."/>
            <person name="Grabherr M."/>
            <person name="Ren Q."/>
            <person name="Zdobnov E.M."/>
            <person name="Lobo N.F."/>
            <person name="Campbell K.S."/>
            <person name="Brown S.E."/>
            <person name="Bonaldo M.F."/>
            <person name="Zhu J."/>
            <person name="Sinkins S.P."/>
            <person name="Hogenkamp D.G."/>
            <person name="Amedeo P."/>
            <person name="Arensburger P."/>
            <person name="Atkinson P.W."/>
            <person name="Bidwell S.L."/>
            <person name="Biedler J."/>
            <person name="Birney E."/>
            <person name="Bruggner R.V."/>
            <person name="Costas J."/>
            <person name="Coy M.R."/>
            <person name="Crabtree J."/>
            <person name="Crawford M."/>
            <person name="DeBruyn B."/>
            <person name="DeCaprio D."/>
            <person name="Eiglmeier K."/>
            <person name="Eisenstadt E."/>
            <person name="El-Dorry H."/>
            <person name="Gelbart W.M."/>
            <person name="Gomes S.L."/>
            <person name="Hammond M."/>
            <person name="Hannick L.I."/>
            <person name="Hogan J.R."/>
            <person name="Holmes M.H."/>
            <person name="Jaffe D."/>
            <person name="Johnston S.J."/>
            <person name="Kennedy R.C."/>
            <person name="Koo H."/>
            <person name="Kravitz S."/>
            <person name="Kriventseva E.V."/>
            <person name="Kulp D."/>
            <person name="Labutti K."/>
            <person name="Lee E."/>
            <person name="Li S."/>
            <person name="Lovin D.D."/>
            <person name="Mao C."/>
            <person name="Mauceli E."/>
            <person name="Menck C.F."/>
            <person name="Miller J.R."/>
            <person name="Montgomery P."/>
            <person name="Mori A."/>
            <person name="Nascimento A.L."/>
            <person name="Naveira H.F."/>
            <person name="Nusbaum C."/>
            <person name="O'Leary S.B."/>
            <person name="Orvis J."/>
            <person name="Pertea M."/>
            <person name="Quesneville H."/>
            <person name="Reidenbach K.R."/>
            <person name="Rogers Y.-H.C."/>
            <person name="Roth C.W."/>
            <person name="Schneider J.R."/>
            <person name="Schatz M."/>
            <person name="Shumway M."/>
            <person name="Stanke M."/>
            <person name="Stinson E.O."/>
            <person name="Tubio J.M.C."/>
            <person name="Vanzee J.P."/>
            <person name="Verjovski-Almeida S."/>
            <person name="Werner D."/>
            <person name="White O.R."/>
            <person name="Wyder S."/>
            <person name="Zeng Q."/>
            <person name="Zhao Q."/>
            <person name="Zhao Y."/>
            <person name="Hill C.A."/>
            <person name="Raikhel A.S."/>
            <person name="Soares M.B."/>
            <person name="Knudson D.L."/>
            <person name="Lee N.H."/>
            <person name="Galagan J."/>
            <person name="Salzberg S.L."/>
            <person name="Paulsen I.T."/>
            <person name="Dimopoulos G."/>
            <person name="Collins F.H."/>
            <person name="Bruce B."/>
            <person name="Fraser-Liggett C.M."/>
            <person name="Severson D.W."/>
        </authorList>
    </citation>
    <scope>NUCLEOTIDE SEQUENCE [LARGE SCALE GENOMIC DNA]</scope>
    <scope>ALTERNATIVE SPLICING (ISOFORMS A; B AND E)</scope>
    <source>
        <strain>LVPib12</strain>
    </source>
</reference>
<keyword id="KW-0025">Alternative splicing</keyword>
<keyword id="KW-0119">Carbohydrate metabolism</keyword>
<keyword id="KW-0963">Cytoplasm</keyword>
<keyword id="KW-0378">Hydrolase</keyword>
<keyword id="KW-1185">Reference proteome</keyword>
<accession>Q16HW7</accession>
<accession>Q16HW8</accession>
<accession>Q16HW9</accession>
<name>GNPI_AEDAE</name>
<protein>
    <recommendedName>
        <fullName evidence="4">Glucosamine-6-phosphate deaminase</fullName>
        <shortName>GNPDA</shortName>
        <shortName>GlcN6P deaminase</shortName>
        <ecNumber evidence="3">3.5.99.6</ecNumber>
    </recommendedName>
    <alternativeName>
        <fullName evidence="4">Glucosamine-6-phosphate isomerase</fullName>
        <shortName evidence="4">GNPI</shortName>
    </alternativeName>
</protein>
<gene>
    <name type="primary">Gnpda1</name>
    <name type="ORF">AAEL013877</name>
</gene>
<organism evidence="5">
    <name type="scientific">Aedes aegypti</name>
    <name type="common">Yellowfever mosquito</name>
    <name type="synonym">Culex aegypti</name>
    <dbReference type="NCBI Taxonomy" id="7159"/>
    <lineage>
        <taxon>Eukaryota</taxon>
        <taxon>Metazoa</taxon>
        <taxon>Ecdysozoa</taxon>
        <taxon>Arthropoda</taxon>
        <taxon>Hexapoda</taxon>
        <taxon>Insecta</taxon>
        <taxon>Pterygota</taxon>
        <taxon>Neoptera</taxon>
        <taxon>Endopterygota</taxon>
        <taxon>Diptera</taxon>
        <taxon>Nematocera</taxon>
        <taxon>Culicoidea</taxon>
        <taxon>Culicidae</taxon>
        <taxon>Culicinae</taxon>
        <taxon>Aedini</taxon>
        <taxon>Aedes</taxon>
        <taxon>Stegomyia</taxon>
    </lineage>
</organism>
<feature type="chain" id="PRO_0000328089" description="Glucosamine-6-phosphate deaminase">
    <location>
        <begin position="1"/>
        <end position="278"/>
    </location>
</feature>
<feature type="active site" description="Proton acceptor; for enolization step" evidence="1">
    <location>
        <position position="72"/>
    </location>
</feature>
<feature type="active site" description="For ring-opening step" evidence="1">
    <location>
        <position position="141"/>
    </location>
</feature>
<feature type="active site" description="Proton acceptor; for ring-opening step" evidence="1">
    <location>
        <position position="143"/>
    </location>
</feature>
<feature type="active site" description="For ring-opening step" evidence="1">
    <location>
        <position position="148"/>
    </location>
</feature>
<feature type="splice variant" id="VSP_032746" description="In isoform A." evidence="4">
    <original>ALSNVHHKLIEEGSTDVRKLCK</original>
    <variation>SLYDVHSKLIEGT</variation>
    <location>
        <begin position="257"/>
        <end position="278"/>
    </location>
</feature>
<feature type="splice variant" id="VSP_032747" description="In isoform B." evidence="4">
    <original>ALSNVHHKLIEEGSTDVRKLCK</original>
    <variation>DCYVLAAASGDLDDATRPN</variation>
    <location>
        <begin position="257"/>
        <end position="278"/>
    </location>
</feature>
<sequence>MRLIILDTSDYVGEWSAKYVMKRINDFKPGPSRFFTLGLPTGSTPLGLYRNLIKFHQEGKISFKYVKTFNMDEYVDLPRDHPESYHYFMWHNFFKHIDIDPVNVHILDGNAPDLVAECNAFEDKIKAAGGIELFIGGIGPDGHIAFNEPGSSLVSRTRVKTLAQDTLEANARFFGNDISKVPKQALTVGVGTVMDAREVMILIIGAHKAFALYKAIEEGVNHMWTVSAFQQHPHTIMICDEDATLELRVKTVKYFKALSNVHHKLIEEGSTDVRKLCK</sequence>
<evidence type="ECO:0000250" key="1"/>
<evidence type="ECO:0000250" key="2">
    <source>
        <dbReference type="UniProtKB" id="O88958"/>
    </source>
</evidence>
<evidence type="ECO:0000250" key="3">
    <source>
        <dbReference type="UniProtKB" id="P46926"/>
    </source>
</evidence>
<evidence type="ECO:0000305" key="4"/>
<evidence type="ECO:0000312" key="5">
    <source>
        <dbReference type="Proteomes" id="UP000008820"/>
    </source>
</evidence>